<comment type="function">
    <text evidence="1">Catalyzes the synthesis of the hydroxymethylpyrimidine phosphate (HMP-P) moiety of thiamine from aminoimidazole ribotide (AIR) in a radical S-adenosyl-L-methionine (SAM)-dependent reaction.</text>
</comment>
<comment type="catalytic activity">
    <reaction evidence="1">
        <text>5-amino-1-(5-phospho-beta-D-ribosyl)imidazole + S-adenosyl-L-methionine = 4-amino-2-methyl-5-(phosphooxymethyl)pyrimidine + CO + 5'-deoxyadenosine + formate + L-methionine + 3 H(+)</text>
        <dbReference type="Rhea" id="RHEA:24840"/>
        <dbReference type="ChEBI" id="CHEBI:15378"/>
        <dbReference type="ChEBI" id="CHEBI:15740"/>
        <dbReference type="ChEBI" id="CHEBI:17245"/>
        <dbReference type="ChEBI" id="CHEBI:17319"/>
        <dbReference type="ChEBI" id="CHEBI:57844"/>
        <dbReference type="ChEBI" id="CHEBI:58354"/>
        <dbReference type="ChEBI" id="CHEBI:59789"/>
        <dbReference type="ChEBI" id="CHEBI:137981"/>
        <dbReference type="EC" id="4.1.99.17"/>
    </reaction>
</comment>
<comment type="cofactor">
    <cofactor evidence="1">
        <name>[4Fe-4S] cluster</name>
        <dbReference type="ChEBI" id="CHEBI:49883"/>
    </cofactor>
    <text evidence="1">Binds 1 [4Fe-4S] cluster per subunit. The cluster is coordinated with 3 cysteines and an exchangeable S-adenosyl-L-methionine.</text>
</comment>
<comment type="pathway">
    <text evidence="1">Cofactor biosynthesis; thiamine diphosphate biosynthesis.</text>
</comment>
<comment type="similarity">
    <text evidence="1">Belongs to the ThiC family.</text>
</comment>
<proteinExistence type="inferred from homology"/>
<organism>
    <name type="scientific">Prochlorococcus marinus subsp. pastoris (strain CCMP1986 / NIES-2087 / MED4)</name>
    <dbReference type="NCBI Taxonomy" id="59919"/>
    <lineage>
        <taxon>Bacteria</taxon>
        <taxon>Bacillati</taxon>
        <taxon>Cyanobacteriota</taxon>
        <taxon>Cyanophyceae</taxon>
        <taxon>Synechococcales</taxon>
        <taxon>Prochlorococcaceae</taxon>
        <taxon>Prochlorococcus</taxon>
    </lineage>
</organism>
<dbReference type="EC" id="4.1.99.17" evidence="1"/>
<dbReference type="EMBL" id="BX548174">
    <property type="protein sequence ID" value="CAE20070.1"/>
    <property type="molecule type" value="Genomic_DNA"/>
</dbReference>
<dbReference type="RefSeq" id="WP_011133238.1">
    <property type="nucleotide sequence ID" value="NC_005072.1"/>
</dbReference>
<dbReference type="SMR" id="Q7UZP7"/>
<dbReference type="STRING" id="59919.PMM1611"/>
<dbReference type="KEGG" id="pmm:PMM1611"/>
<dbReference type="eggNOG" id="COG0422">
    <property type="taxonomic scope" value="Bacteria"/>
</dbReference>
<dbReference type="HOGENOM" id="CLU_013181_2_2_3"/>
<dbReference type="OrthoDB" id="9805897at2"/>
<dbReference type="UniPathway" id="UPA00060"/>
<dbReference type="Proteomes" id="UP000001026">
    <property type="component" value="Chromosome"/>
</dbReference>
<dbReference type="GO" id="GO:0005829">
    <property type="term" value="C:cytosol"/>
    <property type="evidence" value="ECO:0007669"/>
    <property type="project" value="TreeGrafter"/>
</dbReference>
<dbReference type="GO" id="GO:0051539">
    <property type="term" value="F:4 iron, 4 sulfur cluster binding"/>
    <property type="evidence" value="ECO:0007669"/>
    <property type="project" value="UniProtKB-KW"/>
</dbReference>
<dbReference type="GO" id="GO:0016830">
    <property type="term" value="F:carbon-carbon lyase activity"/>
    <property type="evidence" value="ECO:0007669"/>
    <property type="project" value="InterPro"/>
</dbReference>
<dbReference type="GO" id="GO:0008270">
    <property type="term" value="F:zinc ion binding"/>
    <property type="evidence" value="ECO:0007669"/>
    <property type="project" value="UniProtKB-UniRule"/>
</dbReference>
<dbReference type="GO" id="GO:0009228">
    <property type="term" value="P:thiamine biosynthetic process"/>
    <property type="evidence" value="ECO:0007669"/>
    <property type="project" value="UniProtKB-KW"/>
</dbReference>
<dbReference type="GO" id="GO:0009229">
    <property type="term" value="P:thiamine diphosphate biosynthetic process"/>
    <property type="evidence" value="ECO:0007669"/>
    <property type="project" value="UniProtKB-UniRule"/>
</dbReference>
<dbReference type="FunFam" id="3.20.20.540:FF:000001">
    <property type="entry name" value="Phosphomethylpyrimidine synthase"/>
    <property type="match status" value="1"/>
</dbReference>
<dbReference type="Gene3D" id="6.10.250.620">
    <property type="match status" value="1"/>
</dbReference>
<dbReference type="Gene3D" id="3.20.20.540">
    <property type="entry name" value="Radical SAM ThiC family, central domain"/>
    <property type="match status" value="1"/>
</dbReference>
<dbReference type="HAMAP" id="MF_00089">
    <property type="entry name" value="ThiC"/>
    <property type="match status" value="1"/>
</dbReference>
<dbReference type="InterPro" id="IPR037509">
    <property type="entry name" value="ThiC"/>
</dbReference>
<dbReference type="InterPro" id="IPR038521">
    <property type="entry name" value="ThiC/Bza_core_dom"/>
</dbReference>
<dbReference type="InterPro" id="IPR002817">
    <property type="entry name" value="ThiC/BzaA/B"/>
</dbReference>
<dbReference type="NCBIfam" id="NF006763">
    <property type="entry name" value="PRK09284.1"/>
    <property type="match status" value="1"/>
</dbReference>
<dbReference type="NCBIfam" id="NF009895">
    <property type="entry name" value="PRK13352.1"/>
    <property type="match status" value="1"/>
</dbReference>
<dbReference type="NCBIfam" id="TIGR00190">
    <property type="entry name" value="thiC"/>
    <property type="match status" value="1"/>
</dbReference>
<dbReference type="PANTHER" id="PTHR30557:SF1">
    <property type="entry name" value="PHOSPHOMETHYLPYRIMIDINE SYNTHASE, CHLOROPLASTIC"/>
    <property type="match status" value="1"/>
</dbReference>
<dbReference type="PANTHER" id="PTHR30557">
    <property type="entry name" value="THIAMINE BIOSYNTHESIS PROTEIN THIC"/>
    <property type="match status" value="1"/>
</dbReference>
<dbReference type="Pfam" id="PF01964">
    <property type="entry name" value="ThiC_Rad_SAM"/>
    <property type="match status" value="1"/>
</dbReference>
<dbReference type="SFLD" id="SFLDF00407">
    <property type="entry name" value="phosphomethylpyrimidine_syntha"/>
    <property type="match status" value="1"/>
</dbReference>
<dbReference type="SFLD" id="SFLDG01114">
    <property type="entry name" value="phosphomethylpyrimidine_syntha"/>
    <property type="match status" value="1"/>
</dbReference>
<dbReference type="SFLD" id="SFLDS00113">
    <property type="entry name" value="Radical_SAM_Phosphomethylpyrim"/>
    <property type="match status" value="1"/>
</dbReference>
<protein>
    <recommendedName>
        <fullName evidence="1">Phosphomethylpyrimidine synthase</fullName>
        <ecNumber evidence="1">4.1.99.17</ecNumber>
    </recommendedName>
    <alternativeName>
        <fullName evidence="1">Hydroxymethylpyrimidine phosphate synthase</fullName>
        <shortName evidence="1">HMP-P synthase</shortName>
        <shortName evidence="1">HMP-phosphate synthase</shortName>
        <shortName evidence="1">HMPP synthase</shortName>
    </alternativeName>
    <alternativeName>
        <fullName evidence="1">Thiamine biosynthesis protein ThiC</fullName>
    </alternativeName>
</protein>
<gene>
    <name evidence="1" type="primary">thiC</name>
    <name type="ordered locus">PMM1611</name>
</gene>
<accession>Q7UZP7</accession>
<reference key="1">
    <citation type="journal article" date="2003" name="Nature">
        <title>Genome divergence in two Prochlorococcus ecotypes reflects oceanic niche differentiation.</title>
        <authorList>
            <person name="Rocap G."/>
            <person name="Larimer F.W."/>
            <person name="Lamerdin J.E."/>
            <person name="Malfatti S."/>
            <person name="Chain P."/>
            <person name="Ahlgren N.A."/>
            <person name="Arellano A."/>
            <person name="Coleman M."/>
            <person name="Hauser L."/>
            <person name="Hess W.R."/>
            <person name="Johnson Z.I."/>
            <person name="Land M.L."/>
            <person name="Lindell D."/>
            <person name="Post A.F."/>
            <person name="Regala W."/>
            <person name="Shah M."/>
            <person name="Shaw S.L."/>
            <person name="Steglich C."/>
            <person name="Sullivan M.B."/>
            <person name="Ting C.S."/>
            <person name="Tolonen A."/>
            <person name="Webb E.A."/>
            <person name="Zinser E.R."/>
            <person name="Chisholm S.W."/>
        </authorList>
    </citation>
    <scope>NUCLEOTIDE SEQUENCE [LARGE SCALE GENOMIC DNA]</scope>
    <source>
        <strain>CCMP1986 / NIES-2087 / MED4</strain>
    </source>
</reference>
<name>THIC_PROMP</name>
<feature type="chain" id="PRO_0000152824" description="Phosphomethylpyrimidine synthase">
    <location>
        <begin position="1"/>
        <end position="456"/>
    </location>
</feature>
<feature type="binding site" evidence="1">
    <location>
        <position position="80"/>
    </location>
    <ligand>
        <name>substrate</name>
    </ligand>
</feature>
<feature type="binding site" evidence="1">
    <location>
        <position position="109"/>
    </location>
    <ligand>
        <name>substrate</name>
    </ligand>
</feature>
<feature type="binding site" evidence="1">
    <location>
        <position position="139"/>
    </location>
    <ligand>
        <name>substrate</name>
    </ligand>
</feature>
<feature type="binding site" evidence="1">
    <location>
        <position position="175"/>
    </location>
    <ligand>
        <name>substrate</name>
    </ligand>
</feature>
<feature type="binding site" evidence="1">
    <location>
        <begin position="195"/>
        <end position="197"/>
    </location>
    <ligand>
        <name>substrate</name>
    </ligand>
</feature>
<feature type="binding site" evidence="1">
    <location>
        <begin position="236"/>
        <end position="239"/>
    </location>
    <ligand>
        <name>substrate</name>
    </ligand>
</feature>
<feature type="binding site" evidence="1">
    <location>
        <position position="275"/>
    </location>
    <ligand>
        <name>substrate</name>
    </ligand>
</feature>
<feature type="binding site" evidence="1">
    <location>
        <position position="279"/>
    </location>
    <ligand>
        <name>Zn(2+)</name>
        <dbReference type="ChEBI" id="CHEBI:29105"/>
    </ligand>
</feature>
<feature type="binding site" evidence="1">
    <location>
        <position position="302"/>
    </location>
    <ligand>
        <name>substrate</name>
    </ligand>
</feature>
<feature type="binding site" evidence="1">
    <location>
        <position position="343"/>
    </location>
    <ligand>
        <name>Zn(2+)</name>
        <dbReference type="ChEBI" id="CHEBI:29105"/>
    </ligand>
</feature>
<feature type="binding site" evidence="1">
    <location>
        <position position="423"/>
    </location>
    <ligand>
        <name>[4Fe-4S] cluster</name>
        <dbReference type="ChEBI" id="CHEBI:49883"/>
        <note>4Fe-4S-S-AdoMet</note>
    </ligand>
</feature>
<feature type="binding site" evidence="1">
    <location>
        <position position="426"/>
    </location>
    <ligand>
        <name>[4Fe-4S] cluster</name>
        <dbReference type="ChEBI" id="CHEBI:49883"/>
        <note>4Fe-4S-S-AdoMet</note>
    </ligand>
</feature>
<feature type="binding site" evidence="1">
    <location>
        <position position="431"/>
    </location>
    <ligand>
        <name>[4Fe-4S] cluster</name>
        <dbReference type="ChEBI" id="CHEBI:49883"/>
        <note>4Fe-4S-S-AdoMet</note>
    </ligand>
</feature>
<sequence length="456" mass="50874">MRNSWIQPRIGQKNITQMNFAKNGHITEEMNYVAKKENLPPSLIMEEVARGRLIIPANVNHVNLEPMAIGIASKCKVNANIGASPNASDINEEVEKLKLAVKYGADTVMDLSTGGVNLDEVRQAIIKESSVPIGTVPVYQALESAHGSIERLTEDDFLHIIEKHCQQGVDYQTIHAGLLIEHLPKVKGRITGIVSRGGGILAQWMLHHFKQNPLYTRFDDICEIFKKYDCTFSLGDSLRPGCLHDASDDAQLAELKTLGELTRRAWTHNVQVMVEGPGHVPMDQIEFNVRKQMEECSEAPFYVLGPLVTDISPGYDHISSAIGAAMAGWYGTAMLCYVTPKEHLGLPNAEDVREGLIAYKIAAHAADIARHRAGARDRDDELSHARYNFDWNKQFELSLDPERAKQYHDETLPEEIFKKAEFCSMCGPNHCPMNSKISDETLDELNNKLTKCDTSV</sequence>
<keyword id="KW-0004">4Fe-4S</keyword>
<keyword id="KW-0408">Iron</keyword>
<keyword id="KW-0411">Iron-sulfur</keyword>
<keyword id="KW-0456">Lyase</keyword>
<keyword id="KW-0479">Metal-binding</keyword>
<keyword id="KW-0949">S-adenosyl-L-methionine</keyword>
<keyword id="KW-0784">Thiamine biosynthesis</keyword>
<keyword id="KW-0862">Zinc</keyword>
<evidence type="ECO:0000255" key="1">
    <source>
        <dbReference type="HAMAP-Rule" id="MF_00089"/>
    </source>
</evidence>